<accession>Q15843</accession>
<accession>Q3SXN8</accession>
<accession>Q6LES6</accession>
<organism>
    <name type="scientific">Homo sapiens</name>
    <name type="common">Human</name>
    <dbReference type="NCBI Taxonomy" id="9606"/>
    <lineage>
        <taxon>Eukaryota</taxon>
        <taxon>Metazoa</taxon>
        <taxon>Chordata</taxon>
        <taxon>Craniata</taxon>
        <taxon>Vertebrata</taxon>
        <taxon>Euteleostomi</taxon>
        <taxon>Mammalia</taxon>
        <taxon>Eutheria</taxon>
        <taxon>Euarchontoglires</taxon>
        <taxon>Primates</taxon>
        <taxon>Haplorrhini</taxon>
        <taxon>Catarrhini</taxon>
        <taxon>Hominidae</taxon>
        <taxon>Homo</taxon>
    </lineage>
</organism>
<proteinExistence type="evidence at protein level"/>
<evidence type="ECO:0000250" key="1">
    <source>
        <dbReference type="UniProtKB" id="P29595"/>
    </source>
</evidence>
<evidence type="ECO:0000250" key="2">
    <source>
        <dbReference type="UniProtKB" id="Q71UE8"/>
    </source>
</evidence>
<evidence type="ECO:0000269" key="3">
    <source>
    </source>
</evidence>
<evidence type="ECO:0000269" key="4">
    <source>
    </source>
</evidence>
<evidence type="ECO:0000269" key="5">
    <source>
    </source>
</evidence>
<evidence type="ECO:0000269" key="6">
    <source>
    </source>
</evidence>
<evidence type="ECO:0000269" key="7">
    <source>
    </source>
</evidence>
<evidence type="ECO:0000269" key="8">
    <source>
    </source>
</evidence>
<evidence type="ECO:0000269" key="9">
    <source>
    </source>
</evidence>
<evidence type="ECO:0000269" key="10">
    <source>
    </source>
</evidence>
<evidence type="ECO:0000269" key="11">
    <source>
    </source>
</evidence>
<evidence type="ECO:0000269" key="12">
    <source>
    </source>
</evidence>
<evidence type="ECO:0000269" key="13">
    <source>
    </source>
</evidence>
<evidence type="ECO:0000269" key="14">
    <source>
    </source>
</evidence>
<evidence type="ECO:0000269" key="15">
    <source>
    </source>
</evidence>
<evidence type="ECO:0000269" key="16">
    <source>
    </source>
</evidence>
<evidence type="ECO:0000269" key="17">
    <source>
    </source>
</evidence>
<evidence type="ECO:0000269" key="18">
    <source>
    </source>
</evidence>
<evidence type="ECO:0000269" key="19">
    <source>
    </source>
</evidence>
<evidence type="ECO:0000269" key="20">
    <source>
    </source>
</evidence>
<evidence type="ECO:0000269" key="21">
    <source>
    </source>
</evidence>
<evidence type="ECO:0000269" key="22">
    <source>
    </source>
</evidence>
<evidence type="ECO:0000303" key="23">
    <source>
    </source>
</evidence>
<evidence type="ECO:0000303" key="24">
    <source>
    </source>
</evidence>
<evidence type="ECO:0000305" key="25"/>
<evidence type="ECO:0000312" key="26">
    <source>
        <dbReference type="HGNC" id="HGNC:7732"/>
    </source>
</evidence>
<evidence type="ECO:0007744" key="27">
    <source>
        <dbReference type="PDB" id="4F8C"/>
    </source>
</evidence>
<evidence type="ECO:0007744" key="28">
    <source>
        <dbReference type="PDB" id="4FBJ"/>
    </source>
</evidence>
<evidence type="ECO:0007744" key="29">
    <source>
        <dbReference type="PDB" id="4HCP"/>
    </source>
</evidence>
<evidence type="ECO:0007744" key="30">
    <source>
        <dbReference type="PDB" id="8B3G"/>
    </source>
</evidence>
<evidence type="ECO:0007744" key="31">
    <source>
        <dbReference type="PDB" id="8B3I"/>
    </source>
</evidence>
<evidence type="ECO:0007744" key="32">
    <source>
        <dbReference type="PDB" id="8Q7H"/>
    </source>
</evidence>
<evidence type="ECO:0007829" key="33">
    <source>
        <dbReference type="PDB" id="1NDD"/>
    </source>
</evidence>
<evidence type="ECO:0007829" key="34">
    <source>
        <dbReference type="PDB" id="1XT9"/>
    </source>
</evidence>
<evidence type="ECO:0007829" key="35">
    <source>
        <dbReference type="PDB" id="2NVU"/>
    </source>
</evidence>
<evidence type="ECO:0007829" key="36">
    <source>
        <dbReference type="PDB" id="4P5O"/>
    </source>
</evidence>
<gene>
    <name evidence="24 26" type="primary">NEDD8</name>
</gene>
<feature type="chain" id="PRO_0000042767" description="Ubiquitin-like protein NEDD8">
    <location>
        <begin position="1"/>
        <end position="76"/>
    </location>
</feature>
<feature type="propeptide" id="PRO_0000042768" evidence="20">
    <location>
        <begin position="77"/>
        <end position="81"/>
    </location>
</feature>
<feature type="region of interest" description="Interaction with UBE1C" evidence="10">
    <location>
        <begin position="70"/>
        <end position="72"/>
    </location>
</feature>
<feature type="site" description="Interaction with UBE1C" evidence="10">
    <location>
        <position position="8"/>
    </location>
</feature>
<feature type="site" description="Interaction with UBE1C" evidence="10">
    <location>
        <position position="44"/>
    </location>
</feature>
<feature type="modified residue" description="(Microbial infection) Deamidated glutamine" evidence="12 14 15 16 17">
    <location>
        <position position="40"/>
    </location>
</feature>
<feature type="modified residue" description="N6-acetyllysine" evidence="1">
    <location>
        <position position="48"/>
    </location>
</feature>
<feature type="cross-link" description="Glycyl lysine isopeptide (Gly-Lys) (interchain with K-? in acceptor proteins)" evidence="18">
    <location>
        <position position="76"/>
    </location>
</feature>
<feature type="mutagenesis site" description="Decreased interaction with B.pseudomallei Cif protein, leading to decreased deamidation." evidence="15">
    <original>TLT</original>
    <variation>ALA</variation>
    <location>
        <begin position="7"/>
        <end position="9"/>
    </location>
</feature>
<feature type="mutagenesis site" description="Decreased interaction with B.pseudomallei Cif protein, leading to decreased deamidation." evidence="15">
    <original>K</original>
    <variation>A</variation>
    <location>
        <position position="11"/>
    </location>
</feature>
<feature type="mutagenesis site" description="Decreased interaction with B.pseudomallei Cif protein, leading to slightly decreased deamidation." evidence="15">
    <original>E</original>
    <variation>Q</variation>
    <location>
        <position position="31"/>
    </location>
</feature>
<feature type="mutagenesis site" description="Impaired ability to activate cullin-RING-based E3 ubiquitin-protein ligase complexes." evidence="12 14 16 17">
    <original>Q</original>
    <variation>E</variation>
    <location>
        <position position="40"/>
    </location>
</feature>
<feature type="mutagenesis site" description="Decreased interaction with B.pseudomallei Cif protein, leading to slightly decreased deamidation." evidence="15">
    <original>H</original>
    <variation>A</variation>
    <location>
        <position position="68"/>
    </location>
</feature>
<feature type="mutagenesis site" description="Prevents adenylation by UBE1C." evidence="10">
    <original>A</original>
    <variation>R</variation>
    <location>
        <position position="72"/>
    </location>
</feature>
<feature type="sequence conflict" description="In Ref. 2; CAG28590." evidence="25" ref="2">
    <original>I</original>
    <variation>V</variation>
    <location>
        <position position="15"/>
    </location>
</feature>
<feature type="strand" evidence="33">
    <location>
        <begin position="2"/>
        <end position="6"/>
    </location>
</feature>
<feature type="strand" evidence="36">
    <location>
        <begin position="8"/>
        <end position="10"/>
    </location>
</feature>
<feature type="strand" evidence="33">
    <location>
        <begin position="12"/>
        <end position="16"/>
    </location>
</feature>
<feature type="helix" evidence="33">
    <location>
        <begin position="23"/>
        <end position="34"/>
    </location>
</feature>
<feature type="helix" evidence="33">
    <location>
        <begin position="38"/>
        <end position="40"/>
    </location>
</feature>
<feature type="strand" evidence="33">
    <location>
        <begin position="41"/>
        <end position="45"/>
    </location>
</feature>
<feature type="strand" evidence="35">
    <location>
        <begin position="52"/>
        <end position="55"/>
    </location>
</feature>
<feature type="helix" evidence="33">
    <location>
        <begin position="56"/>
        <end position="59"/>
    </location>
</feature>
<feature type="strand" evidence="33">
    <location>
        <begin position="66"/>
        <end position="71"/>
    </location>
</feature>
<feature type="strand" evidence="34">
    <location>
        <begin position="73"/>
        <end position="75"/>
    </location>
</feature>
<reference key="1">
    <citation type="journal article" date="1998" name="Genes Dev.">
        <title>A new NEDD8-ligating system for cullin-4A.</title>
        <authorList>
            <person name="Osaka F."/>
            <person name="Kawasaki H."/>
            <person name="Aida N."/>
            <person name="Saeki M."/>
            <person name="Chiba T."/>
            <person name="Kawashima S."/>
            <person name="Tanaka K."/>
            <person name="Kato S."/>
        </authorList>
    </citation>
    <scope>NUCLEOTIDE SEQUENCE [MRNA]</scope>
    <scope>FUNCTION</scope>
    <source>
        <tissue>Fibrosarcoma</tissue>
    </source>
</reference>
<reference key="2">
    <citation type="submission" date="2004-05" db="EMBL/GenBank/DDBJ databases">
        <title>Cloning of human full open reading frames in Gateway(TM) system entry vector (pDONR201).</title>
        <authorList>
            <person name="Ebert L."/>
            <person name="Schick M."/>
            <person name="Neubert P."/>
            <person name="Schatten R."/>
            <person name="Henze S."/>
            <person name="Korn B."/>
        </authorList>
    </citation>
    <scope>NUCLEOTIDE SEQUENCE [LARGE SCALE MRNA]</scope>
</reference>
<reference key="3">
    <citation type="journal article" date="2004" name="Genome Res.">
        <title>The status, quality, and expansion of the NIH full-length cDNA project: the Mammalian Gene Collection (MGC).</title>
        <authorList>
            <consortium name="The MGC Project Team"/>
        </authorList>
    </citation>
    <scope>NUCLEOTIDE SEQUENCE [LARGE SCALE MRNA]</scope>
</reference>
<reference key="4">
    <citation type="journal article" date="1999" name="Proc. Natl. Acad. Sci. U.S.A.">
        <title>Conjugation of the ubiquitin-like protein NEDD8 to cullin-2 is linked to von Hippel-Lindau tumor suppressor function.</title>
        <authorList>
            <person name="Liakopoulos D."/>
            <person name="Buesgen T."/>
            <person name="Brychzy A."/>
            <person name="Jentsch S."/>
            <person name="Pause A."/>
        </authorList>
    </citation>
    <scope>PROTEIN SEQUENCE OF 1-21</scope>
    <scope>FUNCTION</scope>
</reference>
<reference key="5">
    <citation type="journal article" date="1997" name="J. Biol. Chem.">
        <title>Characterization of NEDD8, a developmentally down-regulated ubiquitin-like protein.</title>
        <authorList>
            <person name="Kamitani T."/>
            <person name="Kito K."/>
            <person name="Nguyen H.P."/>
            <person name="Yeh E.T.H."/>
        </authorList>
    </citation>
    <scope>TISSUE SPECIFICITY</scope>
    <scope>SUBCELLULAR LOCATION</scope>
    <scope>CLEAVAGE SITE</scope>
</reference>
<reference key="6">
    <citation type="journal article" date="1998" name="Biochem. Biophys. Res. Commun.">
        <title>Cleavage of the C-terminus of NEDD8 by UCH-L3.</title>
        <authorList>
            <person name="Wada H."/>
            <person name="Kito K."/>
            <person name="Caskey L.S."/>
            <person name="Yeh E.T.H."/>
            <person name="Kamitani T."/>
        </authorList>
    </citation>
    <scope>CLEAVAGE BY UCHL3</scope>
</reference>
<reference key="7">
    <citation type="journal article" date="1999" name="Oncogene">
        <title>Covalent modification of all members of human cullin family proteins by NEDD8.</title>
        <authorList>
            <person name="Hori T."/>
            <person name="Osaka F."/>
            <person name="Chiba T."/>
            <person name="Miyamoto C."/>
            <person name="Okabayashi K."/>
            <person name="Shimbara N."/>
            <person name="Kato S."/>
            <person name="Tanaka K."/>
        </authorList>
    </citation>
    <scope>FUNCTION</scope>
    <scope>TISSUE SPECIFICITY</scope>
</reference>
<reference key="8">
    <citation type="journal article" date="2001" name="J. Biol. Chem.">
        <title>NUB1, a NEDD8-interacting protein, is induced by interferon and down-regulates the NEDD8 expression.</title>
        <authorList>
            <person name="Kito K."/>
            <person name="Yeh E.T.H."/>
            <person name="Kamitani T."/>
        </authorList>
    </citation>
    <scope>INTERACTION WITH NUB1</scope>
</reference>
<reference key="9">
    <citation type="journal article" date="2002" name="J. Biol. Chem.">
        <title>The NEDD8 pathway is essential for SCF(beta -TrCP)-mediated ubiquitination and processing of the NF-kappa B precursor p105.</title>
        <authorList>
            <person name="Amir R.E."/>
            <person name="Iwai K."/>
            <person name="Ciechanover A."/>
        </authorList>
    </citation>
    <scope>FUNCTION</scope>
</reference>
<reference key="10">
    <citation type="journal article" date="2002" name="J. Biol. Chem.">
        <title>Interaction with Nedd8, a ubiquitin-like protein, enhances the transcriptional activity of the aryl hydrocarbon receptor.</title>
        <authorList>
            <person name="Antenos M."/>
            <person name="Casper R.F."/>
            <person name="Brown T.J."/>
        </authorList>
    </citation>
    <scope>INTERACTION WITH AHR</scope>
</reference>
<reference key="11">
    <citation type="journal article" date="2003" name="J. Biol. Chem.">
        <title>NEDP1, a highly conserved cysteine protease that deneddylates cullins.</title>
        <authorList>
            <person name="Mendoza H.M."/>
            <person name="Shen L.-N."/>
            <person name="Botting C."/>
            <person name="Lewis A."/>
            <person name="Chen J."/>
            <person name="Ink B."/>
            <person name="Hay R.T."/>
        </authorList>
    </citation>
    <scope>CLEAVAGE BY SENP8</scope>
</reference>
<reference key="12">
    <citation type="journal article" date="2003" name="J. Biol. Chem.">
        <title>DEN1 is a dual function protease capable of processing the C-terminus of Nedd8 and deconjugating hyper-neddylated CUL1.</title>
        <authorList>
            <person name="Wu K."/>
            <person name="Yamoah K."/>
            <person name="Dolios G."/>
            <person name="Gan-Erdene T."/>
            <person name="Tan P."/>
            <person name="Chen A."/>
            <person name="Lee C.-G."/>
            <person name="Wei N."/>
            <person name="Wilkinson K.D."/>
            <person name="Wang R."/>
            <person name="Pan Z.-Q."/>
        </authorList>
    </citation>
    <scope>CLEAVAGE BY SENP8</scope>
</reference>
<reference key="13">
    <citation type="journal article" date="2004" name="Cell">
        <title>Mdm2-mediated NEDD8 conjugation of p53 inhibits its transcriptional activity.</title>
        <authorList>
            <person name="Xirodimas D.P."/>
            <person name="Saville M.K."/>
            <person name="Bourdon J.-C."/>
            <person name="Hay R.T."/>
            <person name="Lane D.P."/>
        </authorList>
    </citation>
    <scope>FUNCTION</scope>
</reference>
<reference key="14">
    <citation type="journal article" date="2010" name="Biochem. Biophys. Res. Commun.">
        <title>The bacterial effector Cif interferes with SCF ubiquitin ligase function by inhibiting deneddylation of Cullin1.</title>
        <authorList>
            <person name="Morikawa H."/>
            <person name="Kim M."/>
            <person name="Mimuro H."/>
            <person name="Punginelli C."/>
            <person name="Koyama T."/>
            <person name="Nagai S."/>
            <person name="Miyawaki A."/>
            <person name="Iwai K."/>
            <person name="Sasakawa C."/>
        </authorList>
    </citation>
    <scope>DEAMIDATION (MICROBIAL INFECTION)</scope>
</reference>
<reference key="15">
    <citation type="journal article" date="2010" name="Science">
        <title>Glutamine deamidation and dysfunction of ubiquitin/NEDD8 induced by a bacterial effector family.</title>
        <authorList>
            <person name="Cui J."/>
            <person name="Yao Q."/>
            <person name="Li S."/>
            <person name="Ding X."/>
            <person name="Lu Q."/>
            <person name="Mao H."/>
            <person name="Liu L."/>
            <person name="Zheng N."/>
            <person name="Chen S."/>
            <person name="Shao F."/>
        </authorList>
    </citation>
    <scope>FUNCTION</scope>
    <scope>DEAMIDATION AT GLN-40 (MICROBIAL INFECTION)</scope>
    <scope>MUTAGENESIS OF GLN-40</scope>
</reference>
<reference key="16">
    <citation type="journal article" date="2011" name="J. Mol. Biol.">
        <title>Inhibition of cullin RING ligases by cycle inhibiting factor: evidence for interference with Nedd8-induced conformational control.</title>
        <authorList>
            <person name="Boh B.K."/>
            <person name="Ng M.Y."/>
            <person name="Leck Y.C."/>
            <person name="Shaw B."/>
            <person name="Long J."/>
            <person name="Sun G.W."/>
            <person name="Gan Y.H."/>
            <person name="Searle M.S."/>
            <person name="Layfield R."/>
            <person name="Hagen T."/>
        </authorList>
    </citation>
    <scope>DEAMIDATION AT GLN-40 (MICROBIAL INFECTION)</scope>
    <scope>MUTAGENESIS OF GLN-40</scope>
</reference>
<reference key="17">
    <citation type="journal article" date="2013" name="J. Biol. Chem.">
        <title>The cyclomodulin cycle inhibiting factor (CIF) alters cullin neddylation dynamics.</title>
        <authorList>
            <person name="Toro T.B."/>
            <person name="Toth J.I."/>
            <person name="Petroski M.D."/>
        </authorList>
    </citation>
    <scope>DEAMIDATION AT GLN-40 (MICROBIAL INFECTION)</scope>
    <scope>MUTAGENESIS OF GLN-40</scope>
</reference>
<reference key="18">
    <citation type="journal article" date="2015" name="Nat. Commun.">
        <title>Gln40 deamidation blocks structural reconfiguration and activation of SCF ubiquitin ligase complex by Nedd8.</title>
        <authorList>
            <person name="Yu C."/>
            <person name="Mao H."/>
            <person name="Novitsky E.J."/>
            <person name="Tang X."/>
            <person name="Rychnovsky S.D."/>
            <person name="Zheng N."/>
            <person name="Huang L."/>
        </authorList>
    </citation>
    <scope>DEAMIDATION AT GLN-40 (MICROBIAL INFECTION)</scope>
    <scope>MUTAGENESIS OF GLN-40</scope>
</reference>
<reference key="19">
    <citation type="journal article" date="1998" name="J. Biol. Chem.">
        <title>Crystal structure of the human ubiquitin-like protein NEDD8 and interactions with ubiquitin pathway enzymes.</title>
        <authorList>
            <person name="Whitby F.G."/>
            <person name="Xia G."/>
            <person name="Pickart C.M."/>
            <person name="Hill C.P."/>
        </authorList>
    </citation>
    <scope>X-RAY CRYSTALLOGRAPHY (1.6 ANGSTROMS)</scope>
</reference>
<reference key="20">
    <citation type="journal article" date="2003" name="Mol. Cell">
        <title>The structure of the APPBP1-UBA3-NEDD8-ATP complex reveals the basis for selective ubiquitin-like protein activation by an E1.</title>
        <authorList>
            <person name="Walden H."/>
            <person name="Podgorski M.S."/>
            <person name="Huang D.T."/>
            <person name="Miller D.W."/>
            <person name="Howard R.J."/>
            <person name="Minor D.L. Jr."/>
            <person name="Holton J.M."/>
            <person name="Schulman B.A."/>
        </authorList>
    </citation>
    <scope>X-RAY CRYSTALLOGRAPHY (3.0 ANGSTROMS) OF 1-76 IN COMPLEX WITH UBE1C; APPBP1 AND ATP</scope>
    <scope>FUNCTION</scope>
    <scope>MUTAGENESIS OF ALA-72</scope>
</reference>
<reference key="21">
    <citation type="journal article" date="2005" name="J. Mol. Biol.">
        <title>Structure of a complex between Nedd8 and the Ulp/Senp protease family member Den1.</title>
        <authorList>
            <person name="Reverter D."/>
            <person name="Wu K."/>
            <person name="Erdene T.G."/>
            <person name="Pan Z.-Q."/>
            <person name="Wilkinson K.D."/>
            <person name="Lima C.D."/>
        </authorList>
    </citation>
    <scope>X-RAY CRYSTALLOGRAPHY (2.2 ANGSTROMS) OF 1-76 IN COMPLEX WITH SENP8</scope>
</reference>
<reference evidence="27 28" key="22">
    <citation type="journal article" date="2012" name="Proc. Natl. Acad. Sci. U.S.A.">
        <title>The molecular basis of ubiquitin-like protein NEDD8 deamidation by the bacterial effector protein Cif.</title>
        <authorList>
            <person name="Crow A."/>
            <person name="Hughes R.K."/>
            <person name="Taieb F."/>
            <person name="Oswald E."/>
            <person name="Banfield M.J."/>
        </authorList>
    </citation>
    <scope>X-RAY CRYSTALLOGRAPHY (1.60 ANGSTROMS) IN COMPLEX WITH Y.PSEUDOTUBERCULOSIS PROTEIN CIF</scope>
    <scope>DEAMIDATION AT GLN-40 (MICROBIAL INFECTION)</scope>
</reference>
<reference evidence="29" key="23">
    <citation type="journal article" date="2012" name="Proc. Natl. Acad. Sci. U.S.A.">
        <title>Structural mechanism of ubiquitin and NEDD8 deamidation catalyzed by bacterial effectors that induce macrophage-specific apoptosis.</title>
        <authorList>
            <person name="Yao Q."/>
            <person name="Cui J."/>
            <person name="Wang J."/>
            <person name="Li T."/>
            <person name="Wan X."/>
            <person name="Luo T."/>
            <person name="Gong Y.N."/>
            <person name="Xu Y."/>
            <person name="Huang N."/>
            <person name="Shao F."/>
        </authorList>
    </citation>
    <scope>X-RAY CRYSTALLOGRAPHY (2.52 ANGSTROMS) OF 1-76 IN COMPLEX WITH B.PSEUDOMALLEI PROTEIN CIF</scope>
    <scope>DEAMIDATION AT GLN-40 (MICROBIAL INFECTION)</scope>
    <scope>MUTAGENESIS OF 7-THR--THR-9; LYS-11; GLU-31 AND HIS-68</scope>
</reference>
<reference evidence="32" key="24">
    <citation type="journal article" date="2024" name="Nat. Struct. Mol. Biol.">
        <title>Noncanonical assembly, neddylation and chimeric cullin-RING/RBR ubiquitylation by the 1.8 MDa CUL9 E3 ligase complex.</title>
        <authorList>
            <person name="Horn-Ghetko D."/>
            <person name="Hopf L.V.M."/>
            <person name="Tripathi-Giesgen I."/>
            <person name="Du J."/>
            <person name="Kostrhon S."/>
            <person name="Vu D.T."/>
            <person name="Beier V."/>
            <person name="Steigenberger B."/>
            <person name="Prabu J.R."/>
            <person name="Stier L."/>
            <person name="Bruss E.M."/>
            <person name="Mann M."/>
            <person name="Xiong Y."/>
            <person name="Schulman B.A."/>
        </authorList>
    </citation>
    <scope>STRUCTURE BY ELECTRON MICROSCOPY (4.10 ANGSTROMS)</scope>
    <scope>FUNCTION</scope>
</reference>
<reference evidence="30 31" key="25">
    <citation type="journal article" date="2024" name="Nat. Struct. Mol. Biol.">
        <title>Structural basis for RNA polymerase II ubiquitylation and inactivation in transcription-coupled repair.</title>
        <authorList>
            <person name="Kokic G."/>
            <person name="Yakoub G."/>
            <person name="van den Heuvel D."/>
            <person name="Wondergem A.P."/>
            <person name="van der Meer P.J."/>
            <person name="van der Weegen Y."/>
            <person name="Chernev A."/>
            <person name="Fianu I."/>
            <person name="Fokkens T.J."/>
            <person name="Lorenz S."/>
            <person name="Urlaub H."/>
            <person name="Cramer P."/>
            <person name="Luijsterburg M.S."/>
        </authorList>
    </citation>
    <scope>STRUCTURE BY ELECTRON MICROSCOPY (4.40 ANGSTROMS) IN COMPLEX WITH E3 UBIQUITIN-PROTEIN LIGASE COMPLEX</scope>
    <scope>FUNCTION</scope>
</reference>
<dbReference type="EMBL" id="D23662">
    <property type="protein sequence ID" value="BAA04889.1"/>
    <property type="molecule type" value="mRNA"/>
</dbReference>
<dbReference type="EMBL" id="CR407662">
    <property type="protein sequence ID" value="CAG28590.1"/>
    <property type="molecule type" value="mRNA"/>
</dbReference>
<dbReference type="EMBL" id="BC104200">
    <property type="protein sequence ID" value="AAI04201.1"/>
    <property type="molecule type" value="mRNA"/>
</dbReference>
<dbReference type="EMBL" id="BC104201">
    <property type="protein sequence ID" value="AAI04202.1"/>
    <property type="molecule type" value="mRNA"/>
</dbReference>
<dbReference type="EMBL" id="BC104664">
    <property type="protein sequence ID" value="AAI04665.1"/>
    <property type="molecule type" value="mRNA"/>
</dbReference>
<dbReference type="CCDS" id="CCDS9621.1"/>
<dbReference type="RefSeq" id="NP_006147.1">
    <property type="nucleotide sequence ID" value="NM_006156.3"/>
</dbReference>
<dbReference type="PDB" id="1NDD">
    <property type="method" value="X-ray"/>
    <property type="resolution" value="1.60 A"/>
    <property type="chains" value="A/B/C/D=1-76"/>
</dbReference>
<dbReference type="PDB" id="1R4M">
    <property type="method" value="X-ray"/>
    <property type="resolution" value="3.00 A"/>
    <property type="chains" value="I/J/K/L=1-76"/>
</dbReference>
<dbReference type="PDB" id="1R4N">
    <property type="method" value="X-ray"/>
    <property type="resolution" value="3.60 A"/>
    <property type="chains" value="I/J/K/L=1-76"/>
</dbReference>
<dbReference type="PDB" id="1XT9">
    <property type="method" value="X-ray"/>
    <property type="resolution" value="2.20 A"/>
    <property type="chains" value="B=1-76"/>
</dbReference>
<dbReference type="PDB" id="2BKR">
    <property type="method" value="X-ray"/>
    <property type="resolution" value="1.90 A"/>
    <property type="chains" value="B=1-76"/>
</dbReference>
<dbReference type="PDB" id="2KO3">
    <property type="method" value="NMR"/>
    <property type="chains" value="A=1-76"/>
</dbReference>
<dbReference type="PDB" id="2N7K">
    <property type="method" value="NMR"/>
    <property type="chains" value="A=1-81"/>
</dbReference>
<dbReference type="PDB" id="2NVU">
    <property type="method" value="X-ray"/>
    <property type="resolution" value="2.80 A"/>
    <property type="chains" value="I/J=1-76"/>
</dbReference>
<dbReference type="PDB" id="3DBH">
    <property type="method" value="X-ray"/>
    <property type="resolution" value="2.85 A"/>
    <property type="chains" value="I/J/K/L=1-76"/>
</dbReference>
<dbReference type="PDB" id="3DBL">
    <property type="method" value="X-ray"/>
    <property type="resolution" value="2.90 A"/>
    <property type="chains" value="I/J/K/L=1-76"/>
</dbReference>
<dbReference type="PDB" id="3DBR">
    <property type="method" value="X-ray"/>
    <property type="resolution" value="3.05 A"/>
    <property type="chains" value="I/J/K/L=1-76"/>
</dbReference>
<dbReference type="PDB" id="3DQV">
    <property type="method" value="X-ray"/>
    <property type="resolution" value="3.00 A"/>
    <property type="chains" value="A/B=1-76"/>
</dbReference>
<dbReference type="PDB" id="3GZN">
    <property type="method" value="X-ray"/>
    <property type="resolution" value="3.00 A"/>
    <property type="chains" value="I/J=1-76"/>
</dbReference>
<dbReference type="PDB" id="4F8C">
    <property type="method" value="X-ray"/>
    <property type="resolution" value="1.95 A"/>
    <property type="chains" value="B/D=1-81"/>
</dbReference>
<dbReference type="PDB" id="4FBJ">
    <property type="method" value="X-ray"/>
    <property type="resolution" value="1.60 A"/>
    <property type="chains" value="B=1-81"/>
</dbReference>
<dbReference type="PDB" id="4HCP">
    <property type="method" value="X-ray"/>
    <property type="resolution" value="2.52 A"/>
    <property type="chains" value="B=1-76"/>
</dbReference>
<dbReference type="PDB" id="4P5O">
    <property type="method" value="X-ray"/>
    <property type="resolution" value="3.11 A"/>
    <property type="chains" value="H/K=1-76"/>
</dbReference>
<dbReference type="PDB" id="6R7F">
    <property type="method" value="EM"/>
    <property type="resolution" value="8.20 A"/>
    <property type="chains" value="N=1-76"/>
</dbReference>
<dbReference type="PDB" id="6R7I">
    <property type="method" value="EM"/>
    <property type="resolution" value="5.90 A"/>
    <property type="chains" value="N=1-76"/>
</dbReference>
<dbReference type="PDB" id="6TTU">
    <property type="method" value="EM"/>
    <property type="resolution" value="3.70 A"/>
    <property type="chains" value="N=1-76"/>
</dbReference>
<dbReference type="PDB" id="7B5L">
    <property type="method" value="EM"/>
    <property type="resolution" value="3.80 A"/>
    <property type="chains" value="N=1-76"/>
</dbReference>
<dbReference type="PDB" id="7B5N">
    <property type="method" value="EM"/>
    <property type="resolution" value="3.60 A"/>
    <property type="chains" value="N=1-81"/>
</dbReference>
<dbReference type="PDB" id="7ONI">
    <property type="method" value="EM"/>
    <property type="resolution" value="3.40 A"/>
    <property type="chains" value="N=1-81"/>
</dbReference>
<dbReference type="PDB" id="8B3G">
    <property type="method" value="EM"/>
    <property type="resolution" value="4.40 A"/>
    <property type="chains" value="N=1-76"/>
</dbReference>
<dbReference type="PDB" id="8B3I">
    <property type="method" value="EM"/>
    <property type="resolution" value="3.50 A"/>
    <property type="chains" value="N=1-76"/>
</dbReference>
<dbReference type="PDB" id="8CAF">
    <property type="method" value="X-ray"/>
    <property type="resolution" value="2.66 A"/>
    <property type="chains" value="F/G=1-76"/>
</dbReference>
<dbReference type="PDB" id="8H38">
    <property type="method" value="EM"/>
    <property type="resolution" value="4.25 A"/>
    <property type="chains" value="N=1-76"/>
</dbReference>
<dbReference type="PDB" id="8Q7H">
    <property type="method" value="EM"/>
    <property type="resolution" value="4.10 A"/>
    <property type="chains" value="N=1-81"/>
</dbReference>
<dbReference type="PDB" id="8RX0">
    <property type="method" value="EM"/>
    <property type="resolution" value="3.70 A"/>
    <property type="chains" value="N=1-76"/>
</dbReference>
<dbReference type="PDB" id="8WQC">
    <property type="method" value="EM"/>
    <property type="resolution" value="3.54 A"/>
    <property type="chains" value="K/N=1-76"/>
</dbReference>
<dbReference type="PDB" id="8WQG">
    <property type="method" value="EM"/>
    <property type="resolution" value="4.09 A"/>
    <property type="chains" value="K/N=1-76"/>
</dbReference>
<dbReference type="PDB" id="8WZN">
    <property type="method" value="X-ray"/>
    <property type="resolution" value="1.80 A"/>
    <property type="chains" value="B=1-76"/>
</dbReference>
<dbReference type="PDB" id="8WZO">
    <property type="method" value="X-ray"/>
    <property type="resolution" value="2.25 A"/>
    <property type="chains" value="B=1-76"/>
</dbReference>
<dbReference type="PDBsum" id="1NDD"/>
<dbReference type="PDBsum" id="1R4M"/>
<dbReference type="PDBsum" id="1R4N"/>
<dbReference type="PDBsum" id="1XT9"/>
<dbReference type="PDBsum" id="2BKR"/>
<dbReference type="PDBsum" id="2KO3"/>
<dbReference type="PDBsum" id="2N7K"/>
<dbReference type="PDBsum" id="2NVU"/>
<dbReference type="PDBsum" id="3DBH"/>
<dbReference type="PDBsum" id="3DBL"/>
<dbReference type="PDBsum" id="3DBR"/>
<dbReference type="PDBsum" id="3DQV"/>
<dbReference type="PDBsum" id="3GZN"/>
<dbReference type="PDBsum" id="4F8C"/>
<dbReference type="PDBsum" id="4FBJ"/>
<dbReference type="PDBsum" id="4HCP"/>
<dbReference type="PDBsum" id="4P5O"/>
<dbReference type="PDBsum" id="6R7F"/>
<dbReference type="PDBsum" id="6R7I"/>
<dbReference type="PDBsum" id="6TTU"/>
<dbReference type="PDBsum" id="7B5L"/>
<dbReference type="PDBsum" id="7B5N"/>
<dbReference type="PDBsum" id="7ONI"/>
<dbReference type="PDBsum" id="8B3G"/>
<dbReference type="PDBsum" id="8B3I"/>
<dbReference type="PDBsum" id="8CAF"/>
<dbReference type="PDBsum" id="8H38"/>
<dbReference type="PDBsum" id="8Q7H"/>
<dbReference type="PDBsum" id="8RX0"/>
<dbReference type="PDBsum" id="8WQC"/>
<dbReference type="PDBsum" id="8WQG"/>
<dbReference type="PDBsum" id="8WZN"/>
<dbReference type="PDBsum" id="8WZO"/>
<dbReference type="BMRB" id="Q15843"/>
<dbReference type="EMDB" id="EMD-10585"/>
<dbReference type="EMDB" id="EMD-12037"/>
<dbReference type="EMDB" id="EMD-12041"/>
<dbReference type="EMDB" id="EMD-12995"/>
<dbReference type="EMDB" id="EMD-15827"/>
<dbReference type="EMDB" id="EMD-15829"/>
<dbReference type="EMDB" id="EMD-18216"/>
<dbReference type="EMDB" id="EMD-3313"/>
<dbReference type="EMDB" id="EMD-3314"/>
<dbReference type="EMDB" id="EMD-3315"/>
<dbReference type="EMDB" id="EMD-3316"/>
<dbReference type="EMDB" id="EMD-3317"/>
<dbReference type="EMDB" id="EMD-3401"/>
<dbReference type="EMDB" id="EMD-34455"/>
<dbReference type="EMDB" id="EMD-37739"/>
<dbReference type="EMDB" id="EMD-37744"/>
<dbReference type="EMDB" id="EMD-46644"/>
<dbReference type="EMDB" id="EMD-4739"/>
<dbReference type="EMDB" id="EMD-4742"/>
<dbReference type="EMDB" id="EMD-50292"/>
<dbReference type="EMDB" id="EMD-50295"/>
<dbReference type="SMR" id="Q15843"/>
<dbReference type="BioGRID" id="110815">
    <property type="interactions" value="378"/>
</dbReference>
<dbReference type="CORUM" id="Q15843"/>
<dbReference type="DIP" id="DIP-29266N"/>
<dbReference type="FunCoup" id="Q15843">
    <property type="interactions" value="3955"/>
</dbReference>
<dbReference type="IntAct" id="Q15843">
    <property type="interactions" value="271"/>
</dbReference>
<dbReference type="MINT" id="Q15843"/>
<dbReference type="STRING" id="9606.ENSP00000250495"/>
<dbReference type="BindingDB" id="Q15843"/>
<dbReference type="ChEMBL" id="CHEMBL4295831"/>
<dbReference type="DrugBank" id="DB11759">
    <property type="generic name" value="Pevonedistat"/>
</dbReference>
<dbReference type="MoonDB" id="Q15843">
    <property type="type" value="Predicted"/>
</dbReference>
<dbReference type="GlyGen" id="Q15843">
    <property type="glycosylation" value="3 sites, 1 O-linked glycan (1 site)"/>
</dbReference>
<dbReference type="iPTMnet" id="Q15843"/>
<dbReference type="PhosphoSitePlus" id="Q15843"/>
<dbReference type="BioMuta" id="NEDD8"/>
<dbReference type="DMDM" id="2833270"/>
<dbReference type="jPOST" id="Q15843"/>
<dbReference type="MassIVE" id="Q15843"/>
<dbReference type="PaxDb" id="9606-ENSP00000250495"/>
<dbReference type="PeptideAtlas" id="Q15843"/>
<dbReference type="ProteomicsDB" id="60788"/>
<dbReference type="Pumba" id="Q15843"/>
<dbReference type="TopDownProteomics" id="Q15843"/>
<dbReference type="Antibodypedia" id="22753">
    <property type="antibodies" value="501 antibodies from 38 providers"/>
</dbReference>
<dbReference type="DNASU" id="4738"/>
<dbReference type="Ensembl" id="ENST00000250495.10">
    <property type="protein sequence ID" value="ENSP00000250495.5"/>
    <property type="gene ID" value="ENSG00000129559.13"/>
</dbReference>
<dbReference type="Ensembl" id="ENST00000643069.2">
    <property type="protein sequence ID" value="ENSP00000496420.1"/>
    <property type="gene ID" value="ENSG00000285246.2"/>
</dbReference>
<dbReference type="GeneID" id="4738"/>
<dbReference type="KEGG" id="hsa:4738"/>
<dbReference type="MANE-Select" id="ENST00000250495.10">
    <property type="protein sequence ID" value="ENSP00000250495.5"/>
    <property type="RefSeq nucleotide sequence ID" value="NM_006156.3"/>
    <property type="RefSeq protein sequence ID" value="NP_006147.1"/>
</dbReference>
<dbReference type="UCSC" id="uc001wnn.3">
    <property type="organism name" value="human"/>
</dbReference>
<dbReference type="AGR" id="HGNC:7732"/>
<dbReference type="CTD" id="4738"/>
<dbReference type="DisGeNET" id="4738"/>
<dbReference type="GeneCards" id="NEDD8"/>
<dbReference type="HGNC" id="HGNC:7732">
    <property type="gene designation" value="NEDD8"/>
</dbReference>
<dbReference type="HPA" id="ENSG00000129559">
    <property type="expression patterns" value="Low tissue specificity"/>
</dbReference>
<dbReference type="MIM" id="603171">
    <property type="type" value="gene"/>
</dbReference>
<dbReference type="neXtProt" id="NX_Q15843"/>
<dbReference type="OpenTargets" id="ENSG00000129559"/>
<dbReference type="PharmGKB" id="PA31537"/>
<dbReference type="VEuPathDB" id="HostDB:ENSG00000129559"/>
<dbReference type="eggNOG" id="KOG0005">
    <property type="taxonomic scope" value="Eukaryota"/>
</dbReference>
<dbReference type="GeneTree" id="ENSGT00940000155856"/>
<dbReference type="HOGENOM" id="CLU_010412_6_4_1"/>
<dbReference type="InParanoid" id="Q15843"/>
<dbReference type="OMA" id="YAGKQMA"/>
<dbReference type="OrthoDB" id="428577at2759"/>
<dbReference type="PAN-GO" id="Q15843">
    <property type="GO annotations" value="7 GO annotations based on evolutionary models"/>
</dbReference>
<dbReference type="PhylomeDB" id="Q15843"/>
<dbReference type="TreeFam" id="TF300072"/>
<dbReference type="PathwayCommons" id="Q15843"/>
<dbReference type="Reactome" id="R-HSA-2173789">
    <property type="pathway name" value="TGF-beta receptor signaling activates SMADs"/>
</dbReference>
<dbReference type="Reactome" id="R-HSA-5689603">
    <property type="pathway name" value="UCH proteinases"/>
</dbReference>
<dbReference type="Reactome" id="R-HSA-8856825">
    <property type="pathway name" value="Cargo recognition for clathrin-mediated endocytosis"/>
</dbReference>
<dbReference type="Reactome" id="R-HSA-8951664">
    <property type="pathway name" value="Neddylation"/>
</dbReference>
<dbReference type="Reactome" id="R-HSA-917937">
    <property type="pathway name" value="Iron uptake and transport"/>
</dbReference>
<dbReference type="SignaLink" id="Q15843"/>
<dbReference type="BioGRID-ORCS" id="4738">
    <property type="hits" value="809 hits in 1086 CRISPR screens"/>
</dbReference>
<dbReference type="EvolutionaryTrace" id="Q15843"/>
<dbReference type="GeneWiki" id="NEDD8"/>
<dbReference type="GenomeRNAi" id="4738"/>
<dbReference type="Pharos" id="Q15843">
    <property type="development level" value="Tchem"/>
</dbReference>
<dbReference type="PRO" id="PR:Q15843"/>
<dbReference type="Proteomes" id="UP000005640">
    <property type="component" value="Chromosome 14"/>
</dbReference>
<dbReference type="RNAct" id="Q15843">
    <property type="molecule type" value="protein"/>
</dbReference>
<dbReference type="Bgee" id="ENSG00000129559">
    <property type="expression patterns" value="Expressed in prefrontal cortex and 98 other cell types or tissues"/>
</dbReference>
<dbReference type="ExpressionAtlas" id="Q15843">
    <property type="expression patterns" value="baseline and differential"/>
</dbReference>
<dbReference type="GO" id="GO:0005737">
    <property type="term" value="C:cytoplasm"/>
    <property type="evidence" value="ECO:0000318"/>
    <property type="project" value="GO_Central"/>
</dbReference>
<dbReference type="GO" id="GO:0005829">
    <property type="term" value="C:cytosol"/>
    <property type="evidence" value="ECO:0000314"/>
    <property type="project" value="HPA"/>
</dbReference>
<dbReference type="GO" id="GO:0070062">
    <property type="term" value="C:extracellular exosome"/>
    <property type="evidence" value="ECO:0007005"/>
    <property type="project" value="UniProtKB"/>
</dbReference>
<dbReference type="GO" id="GO:0098978">
    <property type="term" value="C:glutamatergic synapse"/>
    <property type="evidence" value="ECO:0007669"/>
    <property type="project" value="Ensembl"/>
</dbReference>
<dbReference type="GO" id="GO:0005654">
    <property type="term" value="C:nucleoplasm"/>
    <property type="evidence" value="ECO:0000314"/>
    <property type="project" value="HPA"/>
</dbReference>
<dbReference type="GO" id="GO:0005634">
    <property type="term" value="C:nucleus"/>
    <property type="evidence" value="ECO:0000318"/>
    <property type="project" value="GO_Central"/>
</dbReference>
<dbReference type="GO" id="GO:0098794">
    <property type="term" value="C:postsynapse"/>
    <property type="evidence" value="ECO:0007669"/>
    <property type="project" value="Ensembl"/>
</dbReference>
<dbReference type="GO" id="GO:0031386">
    <property type="term" value="F:protein tag activity"/>
    <property type="evidence" value="ECO:0000318"/>
    <property type="project" value="GO_Central"/>
</dbReference>
<dbReference type="GO" id="GO:0031625">
    <property type="term" value="F:ubiquitin protein ligase binding"/>
    <property type="evidence" value="ECO:0000353"/>
    <property type="project" value="UniProtKB"/>
</dbReference>
<dbReference type="GO" id="GO:0009653">
    <property type="term" value="P:anatomical structure morphogenesis"/>
    <property type="evidence" value="ECO:0000304"/>
    <property type="project" value="ProtInc"/>
</dbReference>
<dbReference type="GO" id="GO:0019941">
    <property type="term" value="P:modification-dependent protein catabolic process"/>
    <property type="evidence" value="ECO:0000318"/>
    <property type="project" value="GO_Central"/>
</dbReference>
<dbReference type="GO" id="GO:0008104">
    <property type="term" value="P:protein localization"/>
    <property type="evidence" value="ECO:0007669"/>
    <property type="project" value="Ensembl"/>
</dbReference>
<dbReference type="GO" id="GO:0036211">
    <property type="term" value="P:protein modification process"/>
    <property type="evidence" value="ECO:0000304"/>
    <property type="project" value="ProtInc"/>
</dbReference>
<dbReference type="GO" id="GO:0045116">
    <property type="term" value="P:protein neddylation"/>
    <property type="evidence" value="ECO:0000314"/>
    <property type="project" value="MGI"/>
</dbReference>
<dbReference type="GO" id="GO:0006508">
    <property type="term" value="P:proteolysis"/>
    <property type="evidence" value="ECO:0000304"/>
    <property type="project" value="ProtInc"/>
</dbReference>
<dbReference type="GO" id="GO:0150052">
    <property type="term" value="P:regulation of postsynapse assembly"/>
    <property type="evidence" value="ECO:0007669"/>
    <property type="project" value="Ensembl"/>
</dbReference>
<dbReference type="GO" id="GO:0030162">
    <property type="term" value="P:regulation of proteolysis"/>
    <property type="evidence" value="ECO:0000318"/>
    <property type="project" value="GO_Central"/>
</dbReference>
<dbReference type="GO" id="GO:0006357">
    <property type="term" value="P:regulation of transcription by RNA polymerase II"/>
    <property type="evidence" value="ECO:0007669"/>
    <property type="project" value="Ensembl"/>
</dbReference>
<dbReference type="GO" id="GO:0006511">
    <property type="term" value="P:ubiquitin-dependent protein catabolic process"/>
    <property type="evidence" value="ECO:0000304"/>
    <property type="project" value="ProtInc"/>
</dbReference>
<dbReference type="CDD" id="cd01806">
    <property type="entry name" value="Ubl_NEDD8"/>
    <property type="match status" value="1"/>
</dbReference>
<dbReference type="DisProt" id="DP02302"/>
<dbReference type="FunFam" id="3.10.20.90:FF:000023">
    <property type="entry name" value="NEDD8 protein"/>
    <property type="match status" value="1"/>
</dbReference>
<dbReference type="Gene3D" id="3.10.20.90">
    <property type="entry name" value="Phosphatidylinositol 3-kinase Catalytic Subunit, Chain A, domain 1"/>
    <property type="match status" value="1"/>
</dbReference>
<dbReference type="InterPro" id="IPR038738">
    <property type="entry name" value="Nedd8-like"/>
</dbReference>
<dbReference type="InterPro" id="IPR000626">
    <property type="entry name" value="Ubiquitin-like_dom"/>
</dbReference>
<dbReference type="InterPro" id="IPR029071">
    <property type="entry name" value="Ubiquitin-like_domsf"/>
</dbReference>
<dbReference type="InterPro" id="IPR019954">
    <property type="entry name" value="Ubiquitin_CS"/>
</dbReference>
<dbReference type="InterPro" id="IPR019956">
    <property type="entry name" value="Ubiquitin_dom"/>
</dbReference>
<dbReference type="InterPro" id="IPR050158">
    <property type="entry name" value="Ubiquitin_ubiquitin-like"/>
</dbReference>
<dbReference type="PANTHER" id="PTHR10666">
    <property type="entry name" value="UBIQUITIN"/>
    <property type="match status" value="1"/>
</dbReference>
<dbReference type="Pfam" id="PF00240">
    <property type="entry name" value="ubiquitin"/>
    <property type="match status" value="1"/>
</dbReference>
<dbReference type="PRINTS" id="PR00348">
    <property type="entry name" value="UBIQUITIN"/>
</dbReference>
<dbReference type="SMART" id="SM00213">
    <property type="entry name" value="UBQ"/>
    <property type="match status" value="1"/>
</dbReference>
<dbReference type="SUPFAM" id="SSF54236">
    <property type="entry name" value="Ubiquitin-like"/>
    <property type="match status" value="1"/>
</dbReference>
<dbReference type="PROSITE" id="PS00299">
    <property type="entry name" value="UBIQUITIN_1"/>
    <property type="match status" value="1"/>
</dbReference>
<dbReference type="PROSITE" id="PS50053">
    <property type="entry name" value="UBIQUITIN_2"/>
    <property type="match status" value="1"/>
</dbReference>
<name>NEDD8_HUMAN</name>
<comment type="function">
    <text evidence="3 4 6 10 11 12 18 19 21">Ubiquitin-like protein which plays an important role in cell cycle control and embryogenesis via its conjugation to a limited number of cellular proteins, such as cullins or p53/TP53 (PubMed:10318914, PubMed:10597293, PubMed:11953428, PubMed:14690597, PubMed:15242646, PubMed:9694792, PubMed:38605244, PubMed:38316879). Attachment of NEDD8 to cullins is critical for the recruitment of E2 to the cullin-RING-based E3 ubiquitin-protein ligase complex, thus facilitating polyubiquitination and proteasomal degradation of cyclins and other regulatory proteins (PubMed:10318914, PubMed:10597293, PubMed:11953428, PubMed:20688984, PubMed:9694792, PubMed:38605244, PubMed:38316879). Attachment of NEDD8 to p53/TP53 inhibits p53/TP53 transcriptional activity (PubMed:15242646). Covalent attachment to its substrates requires prior activation by the E1 complex UBE1C-APPBP1 and linkage to the E2 enzyme UBE2M (PubMed:14690597).</text>
</comment>
<comment type="subunit">
    <text evidence="2 5 7">Interacts with AHR; interaction is direct (PubMed:12215427). Interacts with NUB1; interaction is direct (PubMed:11259415). Interacts with ESR1 (By similarity).</text>
</comment>
<comment type="interaction">
    <interactant intactId="EBI-716247">
        <id>Q15843</id>
    </interactant>
    <interactant intactId="EBI-307461">
        <id>Q9Y297</id>
        <label>BTRC</label>
    </interactant>
    <organismsDiffer>false</organismsDiffer>
    <experiments>2</experiments>
</comment>
<comment type="interaction">
    <interactant intactId="EBI-716247">
        <id>Q15843</id>
    </interactant>
    <interactant intactId="EBI-359390">
        <id>Q13616</id>
        <label>CUL1</label>
    </interactant>
    <organismsDiffer>false</organismsDiffer>
    <experiments>23</experiments>
</comment>
<comment type="interaction">
    <interactant intactId="EBI-716247">
        <id>Q15843</id>
    </interactant>
    <interactant intactId="EBI-351506">
        <id>P06396</id>
        <label>GSN</label>
    </interactant>
    <organismsDiffer>false</organismsDiffer>
    <experiments>3</experiments>
</comment>
<comment type="interaction">
    <interactant intactId="EBI-716247">
        <id>Q15843</id>
    </interactant>
    <interactant intactId="EBI-6148525">
        <id>O15037</id>
        <label>KHNYN</label>
    </interactant>
    <organismsDiffer>false</organismsDiffer>
    <experiments>13</experiments>
</comment>
<comment type="interaction">
    <interactant intactId="EBI-716247">
        <id>Q15843</id>
    </interactant>
    <interactant intactId="EBI-741774">
        <id>Q9UNA4</id>
        <label>POLI</label>
    </interactant>
    <organismsDiffer>false</organismsDiffer>
    <experiments>2</experiments>
</comment>
<comment type="interaction">
    <interactant intactId="EBI-716247">
        <id>Q15843</id>
    </interactant>
    <interactant intactId="EBI-1048931">
        <id>P63151</id>
        <label>PPP2R2A</label>
    </interactant>
    <organismsDiffer>false</organismsDiffer>
    <experiments>3</experiments>
</comment>
<comment type="interaction">
    <interactant intactId="EBI-716247">
        <id>Q15843</id>
    </interactant>
    <interactant intactId="EBI-746453">
        <id>P54725</id>
        <label>RAD23A</label>
    </interactant>
    <organismsDiffer>false</organismsDiffer>
    <experiments>2</experiments>
</comment>
<comment type="interaction">
    <interactant intactId="EBI-716247">
        <id>Q15843</id>
    </interactant>
    <interactant intactId="EBI-354380">
        <id>P62913</id>
        <label>RPL11</label>
    </interactant>
    <organismsDiffer>false</organismsDiffer>
    <experiments>5</experiments>
</comment>
<comment type="interaction">
    <interactant intactId="EBI-716247">
        <id>Q15843</id>
    </interactant>
    <interactant intactId="EBI-350806">
        <id>P18124</id>
        <label>RPL7</label>
    </interactant>
    <organismsDiffer>false</organismsDiffer>
    <experiments>2</experiments>
</comment>
<comment type="interaction">
    <interactant intactId="EBI-716247">
        <id>Q15843</id>
    </interactant>
    <interactant intactId="EBI-353105">
        <id>P60866</id>
        <label>RPS20</label>
    </interactant>
    <organismsDiffer>false</organismsDiffer>
    <experiments>3</experiments>
</comment>
<comment type="interaction">
    <interactant intactId="EBI-716247">
        <id>Q15843</id>
    </interactant>
    <interactant intactId="EBI-351193">
        <id>P23396</id>
        <label>RPS3</label>
    </interactant>
    <organismsDiffer>false</organismsDiffer>
    <experiments>3</experiments>
</comment>
<comment type="interaction">
    <interactant intactId="EBI-716247">
        <id>Q15843</id>
    </interactant>
    <interactant intactId="EBI-354360">
        <id>P62081</id>
        <label>RPS7</label>
    </interactant>
    <organismsDiffer>false</organismsDiffer>
    <experiments>2</experiments>
</comment>
<comment type="interaction">
    <interactant intactId="EBI-716247">
        <id>Q15843</id>
    </interactant>
    <interactant intactId="EBI-458391">
        <id>P04271</id>
        <label>S100B</label>
    </interactant>
    <organismsDiffer>false</organismsDiffer>
    <experiments>3</experiments>
</comment>
<comment type="interaction">
    <interactant intactId="EBI-716247">
        <id>Q15843</id>
    </interactant>
    <interactant intactId="EBI-539742">
        <id>Q8WXE9</id>
        <label>STON2</label>
    </interactant>
    <organismsDiffer>false</organismsDiffer>
    <experiments>2</experiments>
</comment>
<comment type="interaction">
    <interactant intactId="EBI-716247">
        <id>Q15843</id>
    </interactant>
    <interactant intactId="EBI-350864">
        <id>P07437</id>
        <label>TUBB</label>
    </interactant>
    <organismsDiffer>false</organismsDiffer>
    <experiments>4</experiments>
</comment>
<comment type="interaction">
    <interactant intactId="EBI-716247">
        <id>Q15843</id>
    </interactant>
    <interactant intactId="EBI-473850">
        <id>P61086</id>
        <label>UBE2K</label>
    </interactant>
    <organismsDiffer>false</organismsDiffer>
    <experiments>3</experiments>
</comment>
<comment type="interaction">
    <interactant intactId="EBI-716247">
        <id>Q15843</id>
    </interactant>
    <interactant intactId="EBI-1041660">
        <id>P61081</id>
        <label>UBE2M</label>
    </interactant>
    <organismsDiffer>false</organismsDiffer>
    <experiments>10</experiments>
</comment>
<comment type="interaction">
    <interactant intactId="EBI-716247">
        <id>Q15843</id>
    </interactant>
    <interactant intactId="EBI-1993627">
        <id>O94888</id>
        <label>UBXN7</label>
    </interactant>
    <organismsDiffer>false</organismsDiffer>
    <experiments>2</experiments>
</comment>
<comment type="interaction">
    <interactant intactId="EBI-716247">
        <id>Q15843</id>
    </interactant>
    <interactant intactId="EBI-714860">
        <id>P09936</id>
        <label>UCHL1</label>
    </interactant>
    <organismsDiffer>false</organismsDiffer>
    <experiments>4</experiments>
</comment>
<comment type="subcellular location">
    <subcellularLocation>
        <location evidence="20">Nucleus</location>
    </subcellularLocation>
    <text evidence="20">Mainly nuclear.</text>
</comment>
<comment type="tissue specificity">
    <text evidence="4 20">Highly expressed in heart, skeletal muscle, spleen, thymus, prostate, testis, ovary, colon and leukocytes.</text>
</comment>
<comment type="PTM">
    <text evidence="8 9 20 22">Cleavage of precursor form by UCHL3 or SENP8 is necessary for function.</text>
</comment>
<comment type="PTM">
    <text evidence="12 13 14 15 16 17">(Microbial infection) Deamidated at Gln-40 by bacterial cyclomodulin Cif produced by enteropathogenic E.coli, Y.pseudotuberculosis or B.pseudomallei, leading to impair NEDD8 ability to activate cullin-RING-based E3 ubiquitin-protein ligase complexes (CRL complexes) (PubMed:20688984, PubMed:21903097, PubMed:23175788, PubMed:23589306, PubMed:26632597). Deamidation occurs on NEDD8-modified cullins (PubMed:20850415, PubMed:21903097). NEDD8 deamidation prevents switching from the inactive to active state by maintaining the 'closed' structure of the CRL complexes (PubMed:23589306, PubMed:26632597). Deamidation may also impair its deconjugation by the COP9 signalosome; However this result needs additional evidences (PubMed:20850415, PubMed:21903097).</text>
</comment>
<comment type="similarity">
    <text evidence="25">Belongs to the ubiquitin family.</text>
</comment>
<keyword id="KW-0002">3D-structure</keyword>
<keyword id="KW-0007">Acetylation</keyword>
<keyword id="KW-0903">Direct protein sequencing</keyword>
<keyword id="KW-1017">Isopeptide bond</keyword>
<keyword id="KW-0539">Nucleus</keyword>
<keyword id="KW-1267">Proteomics identification</keyword>
<keyword id="KW-1185">Reference proteome</keyword>
<keyword id="KW-0833">Ubl conjugation pathway</keyword>
<sequence length="81" mass="9072">MLIKVKTLTGKEIEIDIEPTDKVERIKERVEEKEGIPPQQQRLIYSGKQMNDEKTAADYKILGGSVLHLVLALRGGGGLRQ</sequence>
<protein>
    <recommendedName>
        <fullName evidence="23">Ubiquitin-like protein NEDD8</fullName>
    </recommendedName>
    <alternativeName>
        <fullName>Neddylin</fullName>
    </alternativeName>
    <alternativeName>
        <fullName>Neural precursor cell expressed developmentally down-regulated protein 8</fullName>
        <shortName>NEDD-8</shortName>
    </alternativeName>
</protein>